<proteinExistence type="evidence at protein level"/>
<dbReference type="EMBL" id="AF458249">
    <property type="protein sequence ID" value="AAL59388.1"/>
    <property type="molecule type" value="Genomic_DNA"/>
</dbReference>
<dbReference type="EMBL" id="AK013858">
    <property type="protein sequence ID" value="BAB29021.1"/>
    <property type="molecule type" value="mRNA"/>
</dbReference>
<dbReference type="EMBL" id="AK031892">
    <property type="protein sequence ID" value="BAC27594.1"/>
    <property type="status" value="ALT_SEQ"/>
    <property type="molecule type" value="mRNA"/>
</dbReference>
<dbReference type="EMBL" id="AK078003">
    <property type="protein sequence ID" value="BAC37097.1"/>
    <property type="molecule type" value="mRNA"/>
</dbReference>
<dbReference type="EMBL" id="AK157129">
    <property type="protein sequence ID" value="BAE33972.1"/>
    <property type="molecule type" value="mRNA"/>
</dbReference>
<dbReference type="EMBL" id="BC004033">
    <property type="protein sequence ID" value="AAH04033.1"/>
    <property type="molecule type" value="mRNA"/>
</dbReference>
<dbReference type="EMBL" id="BC024718">
    <property type="protein sequence ID" value="AAH24718.1"/>
    <property type="molecule type" value="mRNA"/>
</dbReference>
<dbReference type="CCDS" id="CCDS17530.1"/>
<dbReference type="RefSeq" id="NP_080650.1">
    <property type="nucleotide sequence ID" value="NM_026374.3"/>
</dbReference>
<dbReference type="PDB" id="4AT7">
    <property type="method" value="X-ray"/>
    <property type="resolution" value="1.90 A"/>
    <property type="chains" value="A=29-390"/>
</dbReference>
<dbReference type="PDB" id="4AT8">
    <property type="method" value="X-ray"/>
    <property type="resolution" value="2.69 A"/>
    <property type="chains" value="A/C=29-390"/>
</dbReference>
<dbReference type="PDB" id="4AT9">
    <property type="method" value="X-ray"/>
    <property type="resolution" value="2.80 A"/>
    <property type="chains" value="A=29-390"/>
</dbReference>
<dbReference type="PDB" id="4ATB">
    <property type="method" value="X-ray"/>
    <property type="resolution" value="3.10 A"/>
    <property type="chains" value="A/C=29-390"/>
</dbReference>
<dbReference type="PDBsum" id="4AT7"/>
<dbReference type="PDBsum" id="4AT8"/>
<dbReference type="PDBsum" id="4AT9"/>
<dbReference type="PDBsum" id="4ATB"/>
<dbReference type="SMR" id="Q9CXY6"/>
<dbReference type="BioGRID" id="212438">
    <property type="interactions" value="67"/>
</dbReference>
<dbReference type="FunCoup" id="Q9CXY6">
    <property type="interactions" value="4190"/>
</dbReference>
<dbReference type="IntAct" id="Q9CXY6">
    <property type="interactions" value="9"/>
</dbReference>
<dbReference type="MINT" id="Q9CXY6"/>
<dbReference type="STRING" id="10090.ENSMUSP00000001042"/>
<dbReference type="GlyGen" id="Q9CXY6">
    <property type="glycosylation" value="1 site, 1 O-linked glycan (1 site)"/>
</dbReference>
<dbReference type="iPTMnet" id="Q9CXY6"/>
<dbReference type="PhosphoSitePlus" id="Q9CXY6"/>
<dbReference type="SwissPalm" id="Q9CXY6"/>
<dbReference type="jPOST" id="Q9CXY6"/>
<dbReference type="PaxDb" id="10090-ENSMUSP00000001042"/>
<dbReference type="ProteomicsDB" id="269476"/>
<dbReference type="Pumba" id="Q9CXY6"/>
<dbReference type="Antibodypedia" id="1451">
    <property type="antibodies" value="425 antibodies from 38 providers"/>
</dbReference>
<dbReference type="DNASU" id="67781"/>
<dbReference type="Ensembl" id="ENSMUST00000001042.10">
    <property type="protein sequence ID" value="ENSMUSP00000001042.9"/>
    <property type="gene ID" value="ENSMUSG00000001016.13"/>
</dbReference>
<dbReference type="GeneID" id="67781"/>
<dbReference type="KEGG" id="mmu:67781"/>
<dbReference type="UCSC" id="uc008qcj.1">
    <property type="organism name" value="mouse"/>
</dbReference>
<dbReference type="AGR" id="MGI:1915031"/>
<dbReference type="CTD" id="3608"/>
<dbReference type="MGI" id="MGI:1915031">
    <property type="gene designation" value="Ilf2"/>
</dbReference>
<dbReference type="VEuPathDB" id="HostDB:ENSMUSG00000001016"/>
<dbReference type="eggNOG" id="KOG3793">
    <property type="taxonomic scope" value="Eukaryota"/>
</dbReference>
<dbReference type="GeneTree" id="ENSGT00940000154879"/>
<dbReference type="HOGENOM" id="CLU_064863_1_0_1"/>
<dbReference type="InParanoid" id="Q9CXY6"/>
<dbReference type="OMA" id="YLAIEMS"/>
<dbReference type="OrthoDB" id="5775647at2759"/>
<dbReference type="PhylomeDB" id="Q9CXY6"/>
<dbReference type="TreeFam" id="TF320194"/>
<dbReference type="Reactome" id="R-MMU-6798695">
    <property type="pathway name" value="Neutrophil degranulation"/>
</dbReference>
<dbReference type="Reactome" id="R-MMU-9833482">
    <property type="pathway name" value="PKR-mediated signaling"/>
</dbReference>
<dbReference type="BioGRID-ORCS" id="67781">
    <property type="hits" value="23 hits in 82 CRISPR screens"/>
</dbReference>
<dbReference type="ChiTaRS" id="Ilf2">
    <property type="organism name" value="mouse"/>
</dbReference>
<dbReference type="EvolutionaryTrace" id="Q9CXY6"/>
<dbReference type="PRO" id="PR:Q9CXY6"/>
<dbReference type="Proteomes" id="UP000000589">
    <property type="component" value="Chromosome 3"/>
</dbReference>
<dbReference type="RNAct" id="Q9CXY6">
    <property type="molecule type" value="protein"/>
</dbReference>
<dbReference type="Bgee" id="ENSMUSG00000001016">
    <property type="expression patterns" value="Expressed in ventricular zone and 284 other cell types or tissues"/>
</dbReference>
<dbReference type="GO" id="GO:0005829">
    <property type="term" value="C:cytosol"/>
    <property type="evidence" value="ECO:0007669"/>
    <property type="project" value="Ensembl"/>
</dbReference>
<dbReference type="GO" id="GO:0005730">
    <property type="term" value="C:nucleolus"/>
    <property type="evidence" value="ECO:0000314"/>
    <property type="project" value="MGI"/>
</dbReference>
<dbReference type="GO" id="GO:0005654">
    <property type="term" value="C:nucleoplasm"/>
    <property type="evidence" value="ECO:0007669"/>
    <property type="project" value="Ensembl"/>
</dbReference>
<dbReference type="GO" id="GO:0005634">
    <property type="term" value="C:nucleus"/>
    <property type="evidence" value="ECO:0000314"/>
    <property type="project" value="MGI"/>
</dbReference>
<dbReference type="GO" id="GO:1990904">
    <property type="term" value="C:ribonucleoprotein complex"/>
    <property type="evidence" value="ECO:0000250"/>
    <property type="project" value="UniProtKB"/>
</dbReference>
<dbReference type="GO" id="GO:0003677">
    <property type="term" value="F:DNA binding"/>
    <property type="evidence" value="ECO:0000250"/>
    <property type="project" value="UniProtKB"/>
</dbReference>
<dbReference type="GO" id="GO:0003725">
    <property type="term" value="F:double-stranded RNA binding"/>
    <property type="evidence" value="ECO:0000250"/>
    <property type="project" value="UniProtKB"/>
</dbReference>
<dbReference type="GO" id="GO:0045893">
    <property type="term" value="P:positive regulation of DNA-templated transcription"/>
    <property type="evidence" value="ECO:0000250"/>
    <property type="project" value="UniProtKB"/>
</dbReference>
<dbReference type="DisProt" id="DP01563"/>
<dbReference type="FunFam" id="1.10.1410.40:FF:000004">
    <property type="entry name" value="Interleukin enhancer-binding factor 2"/>
    <property type="match status" value="1"/>
</dbReference>
<dbReference type="FunFam" id="1.10.1410.40:FF:000010">
    <property type="entry name" value="Interleukin enhancer-binding factor 2"/>
    <property type="match status" value="1"/>
</dbReference>
<dbReference type="FunFam" id="3.30.460.10:FF:000093">
    <property type="entry name" value="Interleukin enhancer-binding factor 2"/>
    <property type="match status" value="1"/>
</dbReference>
<dbReference type="Gene3D" id="1.10.1410.40">
    <property type="match status" value="1"/>
</dbReference>
<dbReference type="Gene3D" id="3.30.460.10">
    <property type="entry name" value="Beta Polymerase, domain 2"/>
    <property type="match status" value="1"/>
</dbReference>
<dbReference type="InterPro" id="IPR006561">
    <property type="entry name" value="DZF_dom"/>
</dbReference>
<dbReference type="InterPro" id="IPR049402">
    <property type="entry name" value="DZF_dom_C"/>
</dbReference>
<dbReference type="InterPro" id="IPR049401">
    <property type="entry name" value="DZF_dom_N"/>
</dbReference>
<dbReference type="InterPro" id="IPR052134">
    <property type="entry name" value="ILF2"/>
</dbReference>
<dbReference type="InterPro" id="IPR043519">
    <property type="entry name" value="NT_sf"/>
</dbReference>
<dbReference type="PANTHER" id="PTHR46447">
    <property type="entry name" value="INTERLEUKIN ENHANCER-BINDING FACTOR"/>
    <property type="match status" value="1"/>
</dbReference>
<dbReference type="PANTHER" id="PTHR46447:SF1">
    <property type="entry name" value="INTERLEUKIN ENHANCER-BINDING FACTOR 2"/>
    <property type="match status" value="1"/>
</dbReference>
<dbReference type="Pfam" id="PF20965">
    <property type="entry name" value="DZF_C"/>
    <property type="match status" value="1"/>
</dbReference>
<dbReference type="Pfam" id="PF07528">
    <property type="entry name" value="DZF_N"/>
    <property type="match status" value="1"/>
</dbReference>
<dbReference type="SMART" id="SM00572">
    <property type="entry name" value="DZF"/>
    <property type="match status" value="1"/>
</dbReference>
<dbReference type="SUPFAM" id="SSF81301">
    <property type="entry name" value="Nucleotidyltransferase"/>
    <property type="match status" value="1"/>
</dbReference>
<dbReference type="PROSITE" id="PS51703">
    <property type="entry name" value="DZF"/>
    <property type="match status" value="1"/>
</dbReference>
<name>ILF2_MOUSE</name>
<organism>
    <name type="scientific">Mus musculus</name>
    <name type="common">Mouse</name>
    <dbReference type="NCBI Taxonomy" id="10090"/>
    <lineage>
        <taxon>Eukaryota</taxon>
        <taxon>Metazoa</taxon>
        <taxon>Chordata</taxon>
        <taxon>Craniata</taxon>
        <taxon>Vertebrata</taxon>
        <taxon>Euteleostomi</taxon>
        <taxon>Mammalia</taxon>
        <taxon>Eutheria</taxon>
        <taxon>Euarchontoglires</taxon>
        <taxon>Glires</taxon>
        <taxon>Rodentia</taxon>
        <taxon>Myomorpha</taxon>
        <taxon>Muroidea</taxon>
        <taxon>Muridae</taxon>
        <taxon>Murinae</taxon>
        <taxon>Mus</taxon>
        <taxon>Mus</taxon>
    </lineage>
</organism>
<evidence type="ECO:0000250" key="1">
    <source>
        <dbReference type="UniProtKB" id="Q12905"/>
    </source>
</evidence>
<evidence type="ECO:0000255" key="2">
    <source>
        <dbReference type="PROSITE-ProRule" id="PRU01040"/>
    </source>
</evidence>
<evidence type="ECO:0000256" key="3">
    <source>
        <dbReference type="SAM" id="MobiDB-lite"/>
    </source>
</evidence>
<evidence type="ECO:0000269" key="4">
    <source>
    </source>
</evidence>
<evidence type="ECO:0000269" key="5">
    <source>
    </source>
</evidence>
<evidence type="ECO:0000305" key="6"/>
<evidence type="ECO:0007744" key="7">
    <source>
    </source>
</evidence>
<evidence type="ECO:0007829" key="8">
    <source>
        <dbReference type="PDB" id="4AT7"/>
    </source>
</evidence>
<evidence type="ECO:0007829" key="9">
    <source>
        <dbReference type="PDB" id="4AT8"/>
    </source>
</evidence>
<evidence type="ECO:0007829" key="10">
    <source>
        <dbReference type="PDB" id="4AT9"/>
    </source>
</evidence>
<evidence type="ECO:0007829" key="11">
    <source>
        <dbReference type="PDB" id="4ATB"/>
    </source>
</evidence>
<accession>Q9CXY6</accession>
<accession>Q3U083</accession>
<accession>Q5RKG0</accession>
<accession>Q8CCY9</accession>
<accession>Q99KS3</accession>
<keyword id="KW-0002">3D-structure</keyword>
<keyword id="KW-0010">Activator</keyword>
<keyword id="KW-0963">Cytoplasm</keyword>
<keyword id="KW-0238">DNA-binding</keyword>
<keyword id="KW-1017">Isopeptide bond</keyword>
<keyword id="KW-0488">Methylation</keyword>
<keyword id="KW-0539">Nucleus</keyword>
<keyword id="KW-0597">Phosphoprotein</keyword>
<keyword id="KW-1185">Reference proteome</keyword>
<keyword id="KW-0804">Transcription</keyword>
<keyword id="KW-0805">Transcription regulation</keyword>
<keyword id="KW-0832">Ubl conjugation</keyword>
<sequence length="390" mass="43062">MRGDRGRGRGGRFGSRGGPGGGFRPFVPHIPFDFYLCEMAFPRVKPAPDETSFSEALLKRNQDLAPNSAEQASILSLVTKINNVIDNLIVAPGTFEVQIEEVRQVGSYKKGTMTTGHNVADLVVILKILPTLEAVAALGNKVVESLRAQDPSEVLTMLTNETGFEISSSDATVKILITTVPPNLRKLDPELHLDIKVLQSALAAIRHARWFEENASQSTVKVLIRLLKDLRIRFPGFEPLTPWILDLLGHYAVMNNPTRQPLALNVAYRRCLQILAAGLFLPGSVGITDPCESGNFRVHTVMTLEQQDMVCYTAQTLVRILSHGGFRKILGQEGDASYLASEISTWDGVIVTPSEKAYEKPPEKKEGEEEEENTEEPPQGEEEESMETQE</sequence>
<gene>
    <name type="primary">Ilf2</name>
    <name type="synonym">Nf45</name>
</gene>
<reference key="1">
    <citation type="journal article" date="1994" name="J. Biol. Chem.">
        <title>Cloning and expression of cyclosporin A- and FK506-sensitive nuclear factor of activated T-cells: NF45 and NF90.</title>
        <authorList>
            <person name="Kao P.N."/>
            <person name="Chen L."/>
            <person name="Brock G."/>
            <person name="Ng J."/>
            <person name="Kenny J."/>
            <person name="Smith A.J."/>
            <person name="Corthesy B."/>
        </authorList>
    </citation>
    <scope>NUCLEOTIDE SEQUENCE [GENOMIC DNA]</scope>
</reference>
<reference key="2">
    <citation type="journal article" date="2005" name="Science">
        <title>The transcriptional landscape of the mammalian genome.</title>
        <authorList>
            <person name="Carninci P."/>
            <person name="Kasukawa T."/>
            <person name="Katayama S."/>
            <person name="Gough J."/>
            <person name="Frith M.C."/>
            <person name="Maeda N."/>
            <person name="Oyama R."/>
            <person name="Ravasi T."/>
            <person name="Lenhard B."/>
            <person name="Wells C."/>
            <person name="Kodzius R."/>
            <person name="Shimokawa K."/>
            <person name="Bajic V.B."/>
            <person name="Brenner S.E."/>
            <person name="Batalov S."/>
            <person name="Forrest A.R."/>
            <person name="Zavolan M."/>
            <person name="Davis M.J."/>
            <person name="Wilming L.G."/>
            <person name="Aidinis V."/>
            <person name="Allen J.E."/>
            <person name="Ambesi-Impiombato A."/>
            <person name="Apweiler R."/>
            <person name="Aturaliya R.N."/>
            <person name="Bailey T.L."/>
            <person name="Bansal M."/>
            <person name="Baxter L."/>
            <person name="Beisel K.W."/>
            <person name="Bersano T."/>
            <person name="Bono H."/>
            <person name="Chalk A.M."/>
            <person name="Chiu K.P."/>
            <person name="Choudhary V."/>
            <person name="Christoffels A."/>
            <person name="Clutterbuck D.R."/>
            <person name="Crowe M.L."/>
            <person name="Dalla E."/>
            <person name="Dalrymple B.P."/>
            <person name="de Bono B."/>
            <person name="Della Gatta G."/>
            <person name="di Bernardo D."/>
            <person name="Down T."/>
            <person name="Engstrom P."/>
            <person name="Fagiolini M."/>
            <person name="Faulkner G."/>
            <person name="Fletcher C.F."/>
            <person name="Fukushima T."/>
            <person name="Furuno M."/>
            <person name="Futaki S."/>
            <person name="Gariboldi M."/>
            <person name="Georgii-Hemming P."/>
            <person name="Gingeras T.R."/>
            <person name="Gojobori T."/>
            <person name="Green R.E."/>
            <person name="Gustincich S."/>
            <person name="Harbers M."/>
            <person name="Hayashi Y."/>
            <person name="Hensch T.K."/>
            <person name="Hirokawa N."/>
            <person name="Hill D."/>
            <person name="Huminiecki L."/>
            <person name="Iacono M."/>
            <person name="Ikeo K."/>
            <person name="Iwama A."/>
            <person name="Ishikawa T."/>
            <person name="Jakt M."/>
            <person name="Kanapin A."/>
            <person name="Katoh M."/>
            <person name="Kawasawa Y."/>
            <person name="Kelso J."/>
            <person name="Kitamura H."/>
            <person name="Kitano H."/>
            <person name="Kollias G."/>
            <person name="Krishnan S.P."/>
            <person name="Kruger A."/>
            <person name="Kummerfeld S.K."/>
            <person name="Kurochkin I.V."/>
            <person name="Lareau L.F."/>
            <person name="Lazarevic D."/>
            <person name="Lipovich L."/>
            <person name="Liu J."/>
            <person name="Liuni S."/>
            <person name="McWilliam S."/>
            <person name="Madan Babu M."/>
            <person name="Madera M."/>
            <person name="Marchionni L."/>
            <person name="Matsuda H."/>
            <person name="Matsuzawa S."/>
            <person name="Miki H."/>
            <person name="Mignone F."/>
            <person name="Miyake S."/>
            <person name="Morris K."/>
            <person name="Mottagui-Tabar S."/>
            <person name="Mulder N."/>
            <person name="Nakano N."/>
            <person name="Nakauchi H."/>
            <person name="Ng P."/>
            <person name="Nilsson R."/>
            <person name="Nishiguchi S."/>
            <person name="Nishikawa S."/>
            <person name="Nori F."/>
            <person name="Ohara O."/>
            <person name="Okazaki Y."/>
            <person name="Orlando V."/>
            <person name="Pang K.C."/>
            <person name="Pavan W.J."/>
            <person name="Pavesi G."/>
            <person name="Pesole G."/>
            <person name="Petrovsky N."/>
            <person name="Piazza S."/>
            <person name="Reed J."/>
            <person name="Reid J.F."/>
            <person name="Ring B.Z."/>
            <person name="Ringwald M."/>
            <person name="Rost B."/>
            <person name="Ruan Y."/>
            <person name="Salzberg S.L."/>
            <person name="Sandelin A."/>
            <person name="Schneider C."/>
            <person name="Schoenbach C."/>
            <person name="Sekiguchi K."/>
            <person name="Semple C.A."/>
            <person name="Seno S."/>
            <person name="Sessa L."/>
            <person name="Sheng Y."/>
            <person name="Shibata Y."/>
            <person name="Shimada H."/>
            <person name="Shimada K."/>
            <person name="Silva D."/>
            <person name="Sinclair B."/>
            <person name="Sperling S."/>
            <person name="Stupka E."/>
            <person name="Sugiura K."/>
            <person name="Sultana R."/>
            <person name="Takenaka Y."/>
            <person name="Taki K."/>
            <person name="Tammoja K."/>
            <person name="Tan S.L."/>
            <person name="Tang S."/>
            <person name="Taylor M.S."/>
            <person name="Tegner J."/>
            <person name="Teichmann S.A."/>
            <person name="Ueda H.R."/>
            <person name="van Nimwegen E."/>
            <person name="Verardo R."/>
            <person name="Wei C.L."/>
            <person name="Yagi K."/>
            <person name="Yamanishi H."/>
            <person name="Zabarovsky E."/>
            <person name="Zhu S."/>
            <person name="Zimmer A."/>
            <person name="Hide W."/>
            <person name="Bult C."/>
            <person name="Grimmond S.M."/>
            <person name="Teasdale R.D."/>
            <person name="Liu E.T."/>
            <person name="Brusic V."/>
            <person name="Quackenbush J."/>
            <person name="Wahlestedt C."/>
            <person name="Mattick J.S."/>
            <person name="Hume D.A."/>
            <person name="Kai C."/>
            <person name="Sasaki D."/>
            <person name="Tomaru Y."/>
            <person name="Fukuda S."/>
            <person name="Kanamori-Katayama M."/>
            <person name="Suzuki M."/>
            <person name="Aoki J."/>
            <person name="Arakawa T."/>
            <person name="Iida J."/>
            <person name="Imamura K."/>
            <person name="Itoh M."/>
            <person name="Kato T."/>
            <person name="Kawaji H."/>
            <person name="Kawagashira N."/>
            <person name="Kawashima T."/>
            <person name="Kojima M."/>
            <person name="Kondo S."/>
            <person name="Konno H."/>
            <person name="Nakano K."/>
            <person name="Ninomiya N."/>
            <person name="Nishio T."/>
            <person name="Okada M."/>
            <person name="Plessy C."/>
            <person name="Shibata K."/>
            <person name="Shiraki T."/>
            <person name="Suzuki S."/>
            <person name="Tagami M."/>
            <person name="Waki K."/>
            <person name="Watahiki A."/>
            <person name="Okamura-Oho Y."/>
            <person name="Suzuki H."/>
            <person name="Kawai J."/>
            <person name="Hayashizaki Y."/>
        </authorList>
    </citation>
    <scope>NUCLEOTIDE SEQUENCE [LARGE SCALE MRNA]</scope>
    <source>
        <strain>C57BL/6J</strain>
        <strain>NOD</strain>
        <tissue>Head</tissue>
        <tissue>Medulla oblongata</tissue>
        <tissue>Spleen</tissue>
    </source>
</reference>
<reference key="3">
    <citation type="journal article" date="2004" name="Genome Res.">
        <title>The status, quality, and expansion of the NIH full-length cDNA project: the Mammalian Gene Collection (MGC).</title>
        <authorList>
            <consortium name="The MGC Project Team"/>
        </authorList>
    </citation>
    <scope>NUCLEOTIDE SEQUENCE [LARGE SCALE MRNA]</scope>
    <source>
        <strain>Czech II</strain>
        <tissue>Mammary tumor</tissue>
    </source>
</reference>
<reference key="4">
    <citation type="journal article" date="1999" name="J. Biol. Chem.">
        <title>Autoantibodies define a family of proteins with conserved double-stranded RNA-binding domains as well as DNA binding activity.</title>
        <authorList>
            <person name="Satoh M."/>
            <person name="Shaheen V.M."/>
            <person name="Kao P.N."/>
            <person name="Okano T."/>
            <person name="Shaw M."/>
            <person name="Yoshida H."/>
            <person name="Richards H.B."/>
            <person name="Reeves W.H."/>
        </authorList>
    </citation>
    <scope>FUNCTION</scope>
    <scope>INTERACTION WITH ILF3</scope>
</reference>
<reference key="5">
    <citation type="journal article" date="2002" name="Mech. Dev.">
        <title>Ilf2 is regulated during meiosis and associated to transcriptionally active chromatin.</title>
        <authorList>
            <person name="Lopez-Fernandez L.A."/>
            <person name="Parraga M."/>
            <person name="del Mazo J."/>
        </authorList>
    </citation>
    <scope>SUBCELLULAR LOCATION</scope>
    <scope>DEVELOPMENTAL STAGE</scope>
    <scope>TISSUE SPECIFICITY</scope>
</reference>
<reference key="6">
    <citation type="journal article" date="2010" name="Cell">
        <title>A tissue-specific atlas of mouse protein phosphorylation and expression.</title>
        <authorList>
            <person name="Huttlin E.L."/>
            <person name="Jedrychowski M.P."/>
            <person name="Elias J.E."/>
            <person name="Goswami T."/>
            <person name="Rad R."/>
            <person name="Beausoleil S.A."/>
            <person name="Villen J."/>
            <person name="Haas W."/>
            <person name="Sowa M.E."/>
            <person name="Gygi S.P."/>
        </authorList>
    </citation>
    <scope>IDENTIFICATION BY MASS SPECTROMETRY [LARGE SCALE ANALYSIS]</scope>
    <source>
        <tissue>Brain</tissue>
        <tissue>Heart</tissue>
        <tissue>Kidney</tissue>
        <tissue>Liver</tissue>
        <tissue>Lung</tissue>
        <tissue>Pancreas</tissue>
        <tissue>Spleen</tissue>
        <tissue>Testis</tissue>
    </source>
</reference>
<reference key="7">
    <citation type="journal article" date="2014" name="Mol. Cell. Proteomics">
        <title>Immunoaffinity enrichment and mass spectrometry analysis of protein methylation.</title>
        <authorList>
            <person name="Guo A."/>
            <person name="Gu H."/>
            <person name="Zhou J."/>
            <person name="Mulhern D."/>
            <person name="Wang Y."/>
            <person name="Lee K.A."/>
            <person name="Yang V."/>
            <person name="Aguiar M."/>
            <person name="Kornhauser J."/>
            <person name="Jia X."/>
            <person name="Ren J."/>
            <person name="Beausoleil S.A."/>
            <person name="Silva J.C."/>
            <person name="Vemulapalli V."/>
            <person name="Bedford M.T."/>
            <person name="Comb M.J."/>
        </authorList>
    </citation>
    <scope>METHYLATION [LARGE SCALE ANALYSIS] AT ARG-16 AND ARG-24</scope>
    <scope>IDENTIFICATION BY MASS SPECTROMETRY [LARGE SCALE ANALYSIS]</scope>
    <source>
        <tissue>Brain</tissue>
        <tissue>Embryo</tissue>
    </source>
</reference>
<comment type="function">
    <text evidence="1 4">Chromatin-interacting protein that forms a stable heterodimer with interleukin enhancer-binding factor 3/ILF3 and plays a role in several biological processes including transcription, innate immunity or cell growth (PubMed:10574923). Essential for the efficient reshuttling of ILF3 (isoform 1 and isoform 2) into the nucleus. Together with ILF3, forms an RNA-binding complex that is required for mitotic progression and cytokinesis by regulating the expression of a cluster of mitotic genes. Mechanistically, competes with STAU1/STAU2-mediated mRNA decay. Also plays a role in the inhibition of various viruses including Japanese encephalitis virus or enterovirus 71 (By similarity) (PubMed:10574923).</text>
</comment>
<comment type="subunit">
    <text evidence="1">Forms heterodimers with ILF3. ILF2-ILF3 heterodimers may also bind to PRKDC/XRCC7: this may stabilize the interaction of PRKDC/XRCC7 and the heterodimeric complex of G22P1/KU70 and XRCC5/KU80. Forms a complex with ILF3, YLPM1, KHDRBS1, RBMX, NCOA5 and PPP1CA. Identified in a IGF2BP1-dependent mRNP granule complex containing untranslated mRNAs. Interacts with IGF2BP1. Interacts with CRBN; this interaction promotes ubiquitination and subsequent degradation of ILF2.</text>
</comment>
<comment type="subcellular location">
    <subcellularLocation>
        <location evidence="1">Nucleus</location>
        <location evidence="1">Nucleolus</location>
    </subcellularLocation>
    <subcellularLocation>
        <location evidence="1">Cytoplasm</location>
    </subcellularLocation>
    <subcellularLocation>
        <location evidence="1">Nucleus</location>
    </subcellularLocation>
    <text evidence="1">Localized in cytoplasmic mRNP granules containing untranslated mRNAs.</text>
</comment>
<comment type="tissue specificity">
    <text evidence="5">Expressed in brain, kidney and ovary; highly expressed in testis, particularly within pachytene cells.</text>
</comment>
<comment type="developmental stage">
    <text evidence="5">Expression in testis begins with developmental differentiation of pachytene spermatocytes.</text>
</comment>
<comment type="PTM">
    <text evidence="1">Ubiquitinated at Lys-45 by CRBN with polyubiquitin chains by the CUL4-RING E3 ligase (CRL4-CRBN) and then degraded by the proteasome.</text>
</comment>
<comment type="sequence caution" evidence="6">
    <conflict type="miscellaneous discrepancy">
        <sequence resource="EMBL-CDS" id="BAC27594"/>
    </conflict>
    <text>Intron retention.</text>
</comment>
<protein>
    <recommendedName>
        <fullName>Interleukin enhancer-binding factor 2</fullName>
    </recommendedName>
    <alternativeName>
        <fullName>Nuclear factor of activated T-cells 45 kDa</fullName>
    </alternativeName>
</protein>
<feature type="chain" id="PRO_0000126064" description="Interleukin enhancer-binding factor 2">
    <location>
        <begin position="1"/>
        <end position="390"/>
    </location>
</feature>
<feature type="domain" description="DZF" evidence="2">
    <location>
        <begin position="24"/>
        <end position="371"/>
    </location>
</feature>
<feature type="region of interest" description="Disordered" evidence="3">
    <location>
        <begin position="1"/>
        <end position="20"/>
    </location>
</feature>
<feature type="region of interest" description="Disordered" evidence="3">
    <location>
        <begin position="351"/>
        <end position="390"/>
    </location>
</feature>
<feature type="compositionally biased region" description="Gly residues" evidence="3">
    <location>
        <begin position="11"/>
        <end position="20"/>
    </location>
</feature>
<feature type="compositionally biased region" description="Basic and acidic residues" evidence="3">
    <location>
        <begin position="356"/>
        <end position="367"/>
    </location>
</feature>
<feature type="compositionally biased region" description="Acidic residues" evidence="3">
    <location>
        <begin position="368"/>
        <end position="390"/>
    </location>
</feature>
<feature type="modified residue" description="Asymmetric dimethylarginine; alternate" evidence="7">
    <location>
        <position position="16"/>
    </location>
</feature>
<feature type="modified residue" description="Omega-N-methylarginine; alternate" evidence="7">
    <location>
        <position position="16"/>
    </location>
</feature>
<feature type="modified residue" description="Omega-N-methylarginine" evidence="7">
    <location>
        <position position="24"/>
    </location>
</feature>
<feature type="modified residue" description="Phosphoserine" evidence="1">
    <location>
        <position position="52"/>
    </location>
</feature>
<feature type="modified residue" description="Phosphoserine" evidence="1">
    <location>
        <position position="68"/>
    </location>
</feature>
<feature type="modified residue" description="Phosphothreonine" evidence="1">
    <location>
        <position position="388"/>
    </location>
</feature>
<feature type="cross-link" description="Glycyl lysine isopeptide (Lys-Gly) (interchain with G-Cter in ubiquitin)" evidence="1">
    <location>
        <position position="45"/>
    </location>
</feature>
<feature type="cross-link" description="Glycyl lysine isopeptide (Lys-Gly) (interchain with G-Cter in SUMO2)" evidence="1">
    <location>
        <position position="186"/>
    </location>
</feature>
<feature type="cross-link" description="Glycyl lysine isopeptide (Lys-Gly) (interchain with G-Cter in SUMO2)" evidence="1">
    <location>
        <position position="364"/>
    </location>
</feature>
<feature type="helix" evidence="8">
    <location>
        <begin position="34"/>
        <end position="36"/>
    </location>
</feature>
<feature type="helix" evidence="8">
    <location>
        <begin position="38"/>
        <end position="40"/>
    </location>
</feature>
<feature type="helix" evidence="8">
    <location>
        <begin position="51"/>
        <end position="64"/>
    </location>
</feature>
<feature type="helix" evidence="8">
    <location>
        <begin position="68"/>
        <end position="90"/>
    </location>
</feature>
<feature type="turn" evidence="9">
    <location>
        <begin position="94"/>
        <end position="98"/>
    </location>
</feature>
<feature type="strand" evidence="8">
    <location>
        <begin position="99"/>
        <end position="105"/>
    </location>
</feature>
<feature type="helix" evidence="8">
    <location>
        <begin position="106"/>
        <end position="110"/>
    </location>
</feature>
<feature type="strand" evidence="8">
    <location>
        <begin position="119"/>
        <end position="128"/>
    </location>
</feature>
<feature type="helix" evidence="8">
    <location>
        <begin position="132"/>
        <end position="149"/>
    </location>
</feature>
<feature type="strand" evidence="10">
    <location>
        <begin position="151"/>
        <end position="153"/>
    </location>
</feature>
<feature type="strand" evidence="8">
    <location>
        <begin position="156"/>
        <end position="160"/>
    </location>
</feature>
<feature type="strand" evidence="8">
    <location>
        <begin position="163"/>
        <end position="167"/>
    </location>
</feature>
<feature type="strand" evidence="8">
    <location>
        <begin position="172"/>
        <end position="179"/>
    </location>
</feature>
<feature type="helix" evidence="8">
    <location>
        <begin position="181"/>
        <end position="185"/>
    </location>
</feature>
<feature type="turn" evidence="8">
    <location>
        <begin position="189"/>
        <end position="191"/>
    </location>
</feature>
<feature type="helix" evidence="8">
    <location>
        <begin position="195"/>
        <end position="214"/>
    </location>
</feature>
<feature type="helix" evidence="8">
    <location>
        <begin position="218"/>
        <end position="233"/>
    </location>
</feature>
<feature type="helix" evidence="8">
    <location>
        <begin position="235"/>
        <end position="237"/>
    </location>
</feature>
<feature type="helix" evidence="8">
    <location>
        <begin position="242"/>
        <end position="254"/>
    </location>
</feature>
<feature type="strand" evidence="11">
    <location>
        <begin position="256"/>
        <end position="260"/>
    </location>
</feature>
<feature type="helix" evidence="8">
    <location>
        <begin position="264"/>
        <end position="276"/>
    </location>
</feature>
<feature type="turn" evidence="8">
    <location>
        <begin position="277"/>
        <end position="280"/>
    </location>
</feature>
<feature type="strand" evidence="8">
    <location>
        <begin position="292"/>
        <end position="294"/>
    </location>
</feature>
<feature type="helix" evidence="8">
    <location>
        <begin position="298"/>
        <end position="301"/>
    </location>
</feature>
<feature type="helix" evidence="8">
    <location>
        <begin position="304"/>
        <end position="322"/>
    </location>
</feature>
<feature type="helix" evidence="8">
    <location>
        <begin position="326"/>
        <end position="329"/>
    </location>
</feature>
<feature type="strand" evidence="8">
    <location>
        <begin position="332"/>
        <end position="334"/>
    </location>
</feature>
<feature type="helix" evidence="8">
    <location>
        <begin position="337"/>
        <end position="340"/>
    </location>
</feature>
<feature type="strand" evidence="8">
    <location>
        <begin position="344"/>
        <end position="346"/>
    </location>
</feature>
<feature type="strand" evidence="8">
    <location>
        <begin position="349"/>
        <end position="351"/>
    </location>
</feature>